<proteinExistence type="inferred from homology"/>
<keyword id="KW-0067">ATP-binding</keyword>
<keyword id="KW-0238">DNA-binding</keyword>
<keyword id="KW-0255">Endonuclease</keyword>
<keyword id="KW-0378">Hydrolase</keyword>
<keyword id="KW-0540">Nuclease</keyword>
<keyword id="KW-0547">Nucleotide-binding</keyword>
<keyword id="KW-1185">Reference proteome</keyword>
<keyword id="KW-0694">RNA-binding</keyword>
<keyword id="KW-0699">rRNA-binding</keyword>
<reference key="1">
    <citation type="journal article" date="2001" name="Science">
        <title>Comparative genomics of Listeria species.</title>
        <authorList>
            <person name="Glaser P."/>
            <person name="Frangeul L."/>
            <person name="Buchrieser C."/>
            <person name="Rusniok C."/>
            <person name="Amend A."/>
            <person name="Baquero F."/>
            <person name="Berche P."/>
            <person name="Bloecker H."/>
            <person name="Brandt P."/>
            <person name="Chakraborty T."/>
            <person name="Charbit A."/>
            <person name="Chetouani F."/>
            <person name="Couve E."/>
            <person name="de Daruvar A."/>
            <person name="Dehoux P."/>
            <person name="Domann E."/>
            <person name="Dominguez-Bernal G."/>
            <person name="Duchaud E."/>
            <person name="Durant L."/>
            <person name="Dussurget O."/>
            <person name="Entian K.-D."/>
            <person name="Fsihi H."/>
            <person name="Garcia-del Portillo F."/>
            <person name="Garrido P."/>
            <person name="Gautier L."/>
            <person name="Goebel W."/>
            <person name="Gomez-Lopez N."/>
            <person name="Hain T."/>
            <person name="Hauf J."/>
            <person name="Jackson D."/>
            <person name="Jones L.-M."/>
            <person name="Kaerst U."/>
            <person name="Kreft J."/>
            <person name="Kuhn M."/>
            <person name="Kunst F."/>
            <person name="Kurapkat G."/>
            <person name="Madueno E."/>
            <person name="Maitournam A."/>
            <person name="Mata Vicente J."/>
            <person name="Ng E."/>
            <person name="Nedjari H."/>
            <person name="Nordsiek G."/>
            <person name="Novella S."/>
            <person name="de Pablos B."/>
            <person name="Perez-Diaz J.-C."/>
            <person name="Purcell R."/>
            <person name="Remmel B."/>
            <person name="Rose M."/>
            <person name="Schlueter T."/>
            <person name="Simoes N."/>
            <person name="Tierrez A."/>
            <person name="Vazquez-Boland J.-A."/>
            <person name="Voss H."/>
            <person name="Wehland J."/>
            <person name="Cossart P."/>
        </authorList>
    </citation>
    <scope>NUCLEOTIDE SEQUENCE [LARGE SCALE GENOMIC DNA]</scope>
    <source>
        <strain>ATCC BAA-679 / EGD-e</strain>
    </source>
</reference>
<sequence length="785" mass="86716">MEKKVEAILEFDKIKKQLTEFASSSLGEQAILELAPATDFQVVQKTQLETEEGAKIIRLRGSAPITGLTDVFAHLKRLEIGGDLNGLEIYQIGSNLRVSRQMKNFMNDLLEIGVELPILGALSDELLVLKEVEEDIAISVDESGKVLDTASEALSTIRRTLRRTEDRVREKLESYLRDRNASKMLSDAVITIRNDRYVIPVKQEYKGHYGGIVHDQSASGQTLFIEPQSVVDLNNERKALQAKEKQEIERILAEISASLAAWINEIHHNTFILGRFDFIFAKARFGKAMKAVTPHLSDAGVVHLIAARHPLLDAAKVVANDIYLGEDFTTIVITGPNTGGKTITLKTLGLLTLMAQSGLQIPAQEDSTIAVFEHVFADIGDEQSIEQSLSTFSSHMTNIVSILEKVNQKSLILYDELGAGTDPQEGAALAIAILDASHEKGASVVATTHYPELKAYGYNRVHATNASVEFNVETLSPTYKLLIGVPGRSNAFDISRRLGLSENIITEARSLVDTESADLNDMISSLEEKRNLAETEYEEARELARGADNLLKDLQKEITNYYQQKDKLIEQASEKAATIVEKAEAEAEEIIRELRTMQLNGAAGIKEHELIDAKTRLGNAKPKTINKTIPQAPKQKPHVFQEGDNVRVLSLGQKGTLLNKISDKEWNVQIGIIKMKIKTADLEYIQPEKPKKQRIITSVHSSGSPAKSELDLRGERYEDALQKVDKYLDEALLAGYPQVAIIHGKGTGALRTGVTEYLKNHRMVKSIRFGAAAEGGNGVTIVEFK</sequence>
<evidence type="ECO:0000255" key="1">
    <source>
        <dbReference type="HAMAP-Rule" id="MF_00092"/>
    </source>
</evidence>
<comment type="function">
    <text evidence="1">Endonuclease that is involved in the suppression of homologous recombination and thus may have a key role in the control of bacterial genetic diversity.</text>
</comment>
<comment type="function">
    <text evidence="1">Acts as a ribosome collision sensor, splitting the ribosome into its 2 subunits. Detects stalled/collided 70S ribosomes which it binds and splits by an ATP-hydrolysis driven conformational change. Acts upstream of the ribosome quality control system (RQC), a ribosome-associated complex that mediates the extraction of incompletely synthesized nascent chains from stalled ribosomes and their subsequent degradation. Probably generates substrates for RQC.</text>
</comment>
<comment type="subunit">
    <text evidence="1">Homodimer. Binds to stalled ribosomes, contacting rRNA.</text>
</comment>
<comment type="similarity">
    <text evidence="1">Belongs to the DNA mismatch repair MutS family. MutS2 subfamily.</text>
</comment>
<gene>
    <name evidence="1" type="primary">mutS2</name>
    <name evidence="1" type="synonym">rqcU</name>
    <name type="ordered locus">lmo1232</name>
</gene>
<name>MUTS2_LISMO</name>
<organism>
    <name type="scientific">Listeria monocytogenes serovar 1/2a (strain ATCC BAA-679 / EGD-e)</name>
    <dbReference type="NCBI Taxonomy" id="169963"/>
    <lineage>
        <taxon>Bacteria</taxon>
        <taxon>Bacillati</taxon>
        <taxon>Bacillota</taxon>
        <taxon>Bacilli</taxon>
        <taxon>Bacillales</taxon>
        <taxon>Listeriaceae</taxon>
        <taxon>Listeria</taxon>
    </lineage>
</organism>
<accession>Q8Y7P1</accession>
<dbReference type="EC" id="3.1.-.-" evidence="1"/>
<dbReference type="EC" id="3.6.4.-" evidence="1"/>
<dbReference type="EMBL" id="AL591978">
    <property type="protein sequence ID" value="CAC99310.1"/>
    <property type="molecule type" value="Genomic_DNA"/>
</dbReference>
<dbReference type="PIR" id="AH1228">
    <property type="entry name" value="AH1228"/>
</dbReference>
<dbReference type="RefSeq" id="NP_464757.1">
    <property type="nucleotide sequence ID" value="NC_003210.1"/>
</dbReference>
<dbReference type="RefSeq" id="WP_010989713.1">
    <property type="nucleotide sequence ID" value="NZ_CP149495.1"/>
</dbReference>
<dbReference type="SMR" id="Q8Y7P1"/>
<dbReference type="STRING" id="169963.gene:17593888"/>
<dbReference type="PaxDb" id="169963-lmo1232"/>
<dbReference type="EnsemblBacteria" id="CAC99310">
    <property type="protein sequence ID" value="CAC99310"/>
    <property type="gene ID" value="CAC99310"/>
</dbReference>
<dbReference type="GeneID" id="986039"/>
<dbReference type="KEGG" id="lmo:lmo1232"/>
<dbReference type="PATRIC" id="fig|169963.11.peg.1263"/>
<dbReference type="eggNOG" id="COG1193">
    <property type="taxonomic scope" value="Bacteria"/>
</dbReference>
<dbReference type="HOGENOM" id="CLU_011252_2_1_9"/>
<dbReference type="OrthoDB" id="9808166at2"/>
<dbReference type="PhylomeDB" id="Q8Y7P1"/>
<dbReference type="BioCyc" id="LMON169963:LMO1232-MONOMER"/>
<dbReference type="Proteomes" id="UP000000817">
    <property type="component" value="Chromosome"/>
</dbReference>
<dbReference type="GO" id="GO:0005524">
    <property type="term" value="F:ATP binding"/>
    <property type="evidence" value="ECO:0007669"/>
    <property type="project" value="UniProtKB-UniRule"/>
</dbReference>
<dbReference type="GO" id="GO:0016887">
    <property type="term" value="F:ATP hydrolysis activity"/>
    <property type="evidence" value="ECO:0007669"/>
    <property type="project" value="InterPro"/>
</dbReference>
<dbReference type="GO" id="GO:0140664">
    <property type="term" value="F:ATP-dependent DNA damage sensor activity"/>
    <property type="evidence" value="ECO:0007669"/>
    <property type="project" value="InterPro"/>
</dbReference>
<dbReference type="GO" id="GO:0003690">
    <property type="term" value="F:double-stranded DNA binding"/>
    <property type="evidence" value="ECO:0000318"/>
    <property type="project" value="GO_Central"/>
</dbReference>
<dbReference type="GO" id="GO:0004519">
    <property type="term" value="F:endonuclease activity"/>
    <property type="evidence" value="ECO:0007669"/>
    <property type="project" value="UniProtKB-UniRule"/>
</dbReference>
<dbReference type="GO" id="GO:0030983">
    <property type="term" value="F:mismatched DNA binding"/>
    <property type="evidence" value="ECO:0007669"/>
    <property type="project" value="InterPro"/>
</dbReference>
<dbReference type="GO" id="GO:0043023">
    <property type="term" value="F:ribosomal large subunit binding"/>
    <property type="evidence" value="ECO:0007669"/>
    <property type="project" value="UniProtKB-UniRule"/>
</dbReference>
<dbReference type="GO" id="GO:0019843">
    <property type="term" value="F:rRNA binding"/>
    <property type="evidence" value="ECO:0007669"/>
    <property type="project" value="UniProtKB-UniRule"/>
</dbReference>
<dbReference type="GO" id="GO:0006298">
    <property type="term" value="P:mismatch repair"/>
    <property type="evidence" value="ECO:0007669"/>
    <property type="project" value="InterPro"/>
</dbReference>
<dbReference type="GO" id="GO:0045910">
    <property type="term" value="P:negative regulation of DNA recombination"/>
    <property type="evidence" value="ECO:0007669"/>
    <property type="project" value="InterPro"/>
</dbReference>
<dbReference type="GO" id="GO:0072344">
    <property type="term" value="P:rescue of stalled ribosome"/>
    <property type="evidence" value="ECO:0007669"/>
    <property type="project" value="UniProtKB-UniRule"/>
</dbReference>
<dbReference type="FunFam" id="3.40.50.300:FF:000830">
    <property type="entry name" value="Endonuclease MutS2"/>
    <property type="match status" value="1"/>
</dbReference>
<dbReference type="Gene3D" id="3.30.1370.110">
    <property type="match status" value="1"/>
</dbReference>
<dbReference type="Gene3D" id="3.40.50.300">
    <property type="entry name" value="P-loop containing nucleotide triphosphate hydrolases"/>
    <property type="match status" value="1"/>
</dbReference>
<dbReference type="HAMAP" id="MF_00092">
    <property type="entry name" value="MutS2"/>
    <property type="match status" value="1"/>
</dbReference>
<dbReference type="InterPro" id="IPR000432">
    <property type="entry name" value="DNA_mismatch_repair_MutS_C"/>
</dbReference>
<dbReference type="InterPro" id="IPR007696">
    <property type="entry name" value="DNA_mismatch_repair_MutS_core"/>
</dbReference>
<dbReference type="InterPro" id="IPR036187">
    <property type="entry name" value="DNA_mismatch_repair_MutS_sf"/>
</dbReference>
<dbReference type="InterPro" id="IPR046893">
    <property type="entry name" value="MSSS"/>
</dbReference>
<dbReference type="InterPro" id="IPR045076">
    <property type="entry name" value="MutS"/>
</dbReference>
<dbReference type="InterPro" id="IPR005747">
    <property type="entry name" value="MutS2"/>
</dbReference>
<dbReference type="InterPro" id="IPR027417">
    <property type="entry name" value="P-loop_NTPase"/>
</dbReference>
<dbReference type="InterPro" id="IPR002625">
    <property type="entry name" value="Smr_dom"/>
</dbReference>
<dbReference type="InterPro" id="IPR036063">
    <property type="entry name" value="Smr_dom_sf"/>
</dbReference>
<dbReference type="NCBIfam" id="TIGR01069">
    <property type="entry name" value="mutS2"/>
    <property type="match status" value="1"/>
</dbReference>
<dbReference type="PANTHER" id="PTHR48466:SF2">
    <property type="entry name" value="OS10G0509000 PROTEIN"/>
    <property type="match status" value="1"/>
</dbReference>
<dbReference type="PANTHER" id="PTHR48466">
    <property type="entry name" value="OS10G0509000 PROTEIN-RELATED"/>
    <property type="match status" value="1"/>
</dbReference>
<dbReference type="Pfam" id="PF20297">
    <property type="entry name" value="MSSS"/>
    <property type="match status" value="1"/>
</dbReference>
<dbReference type="Pfam" id="PF00488">
    <property type="entry name" value="MutS_V"/>
    <property type="match status" value="1"/>
</dbReference>
<dbReference type="Pfam" id="PF01713">
    <property type="entry name" value="Smr"/>
    <property type="match status" value="1"/>
</dbReference>
<dbReference type="PIRSF" id="PIRSF005814">
    <property type="entry name" value="MutS_YshD"/>
    <property type="match status" value="1"/>
</dbReference>
<dbReference type="SMART" id="SM00534">
    <property type="entry name" value="MUTSac"/>
    <property type="match status" value="1"/>
</dbReference>
<dbReference type="SMART" id="SM00533">
    <property type="entry name" value="MUTSd"/>
    <property type="match status" value="1"/>
</dbReference>
<dbReference type="SMART" id="SM00463">
    <property type="entry name" value="SMR"/>
    <property type="match status" value="1"/>
</dbReference>
<dbReference type="SUPFAM" id="SSF48334">
    <property type="entry name" value="DNA repair protein MutS, domain III"/>
    <property type="match status" value="1"/>
</dbReference>
<dbReference type="SUPFAM" id="SSF52540">
    <property type="entry name" value="P-loop containing nucleoside triphosphate hydrolases"/>
    <property type="match status" value="1"/>
</dbReference>
<dbReference type="SUPFAM" id="SSF160443">
    <property type="entry name" value="SMR domain-like"/>
    <property type="match status" value="1"/>
</dbReference>
<dbReference type="PROSITE" id="PS00486">
    <property type="entry name" value="DNA_MISMATCH_REPAIR_2"/>
    <property type="match status" value="1"/>
</dbReference>
<dbReference type="PROSITE" id="PS50828">
    <property type="entry name" value="SMR"/>
    <property type="match status" value="1"/>
</dbReference>
<protein>
    <recommendedName>
        <fullName evidence="1">Endonuclease MutS2</fullName>
        <ecNumber evidence="1">3.1.-.-</ecNumber>
    </recommendedName>
    <alternativeName>
        <fullName evidence="1">Ribosome-associated protein quality control-upstream factor</fullName>
        <shortName evidence="1">RQC-upstream factor</shortName>
        <shortName evidence="1">RqcU</shortName>
        <ecNumber evidence="1">3.6.4.-</ecNumber>
    </alternativeName>
</protein>
<feature type="chain" id="PRO_0000115226" description="Endonuclease MutS2">
    <location>
        <begin position="1"/>
        <end position="785"/>
    </location>
</feature>
<feature type="domain" description="Smr" evidence="1">
    <location>
        <begin position="710"/>
        <end position="785"/>
    </location>
</feature>
<feature type="binding site" evidence="1">
    <location>
        <begin position="335"/>
        <end position="342"/>
    </location>
    <ligand>
        <name>ATP</name>
        <dbReference type="ChEBI" id="CHEBI:30616"/>
    </ligand>
</feature>